<dbReference type="EMBL" id="CP001022">
    <property type="protein sequence ID" value="ACB59596.1"/>
    <property type="molecule type" value="Genomic_DNA"/>
</dbReference>
<dbReference type="RefSeq" id="WP_012369022.1">
    <property type="nucleotide sequence ID" value="NC_010556.1"/>
</dbReference>
<dbReference type="SMR" id="B1YGW3"/>
<dbReference type="STRING" id="262543.Exig_0109"/>
<dbReference type="KEGG" id="esi:Exig_0109"/>
<dbReference type="eggNOG" id="COG0199">
    <property type="taxonomic scope" value="Bacteria"/>
</dbReference>
<dbReference type="HOGENOM" id="CLU_139869_0_0_9"/>
<dbReference type="OrthoDB" id="9810484at2"/>
<dbReference type="Proteomes" id="UP000001681">
    <property type="component" value="Chromosome"/>
</dbReference>
<dbReference type="GO" id="GO:0005737">
    <property type="term" value="C:cytoplasm"/>
    <property type="evidence" value="ECO:0007669"/>
    <property type="project" value="UniProtKB-ARBA"/>
</dbReference>
<dbReference type="GO" id="GO:0015935">
    <property type="term" value="C:small ribosomal subunit"/>
    <property type="evidence" value="ECO:0007669"/>
    <property type="project" value="TreeGrafter"/>
</dbReference>
<dbReference type="GO" id="GO:0019843">
    <property type="term" value="F:rRNA binding"/>
    <property type="evidence" value="ECO:0007669"/>
    <property type="project" value="UniProtKB-UniRule"/>
</dbReference>
<dbReference type="GO" id="GO:0003735">
    <property type="term" value="F:structural constituent of ribosome"/>
    <property type="evidence" value="ECO:0007669"/>
    <property type="project" value="InterPro"/>
</dbReference>
<dbReference type="GO" id="GO:0006412">
    <property type="term" value="P:translation"/>
    <property type="evidence" value="ECO:0007669"/>
    <property type="project" value="UniProtKB-UniRule"/>
</dbReference>
<dbReference type="FunFam" id="4.10.830.10:FF:000003">
    <property type="entry name" value="30S ribosomal protein S14"/>
    <property type="match status" value="1"/>
</dbReference>
<dbReference type="Gene3D" id="4.10.830.10">
    <property type="entry name" value="30s Ribosomal Protein S14, Chain N"/>
    <property type="match status" value="1"/>
</dbReference>
<dbReference type="HAMAP" id="MF_00537">
    <property type="entry name" value="Ribosomal_uS14_1"/>
    <property type="match status" value="1"/>
</dbReference>
<dbReference type="InterPro" id="IPR001209">
    <property type="entry name" value="Ribosomal_uS14"/>
</dbReference>
<dbReference type="InterPro" id="IPR023036">
    <property type="entry name" value="Ribosomal_uS14_bac/plastid"/>
</dbReference>
<dbReference type="InterPro" id="IPR018271">
    <property type="entry name" value="Ribosomal_uS14_CS"/>
</dbReference>
<dbReference type="InterPro" id="IPR043140">
    <property type="entry name" value="Ribosomal_uS14_sf"/>
</dbReference>
<dbReference type="NCBIfam" id="NF006477">
    <property type="entry name" value="PRK08881.1"/>
    <property type="match status" value="1"/>
</dbReference>
<dbReference type="PANTHER" id="PTHR19836">
    <property type="entry name" value="30S RIBOSOMAL PROTEIN S14"/>
    <property type="match status" value="1"/>
</dbReference>
<dbReference type="PANTHER" id="PTHR19836:SF19">
    <property type="entry name" value="SMALL RIBOSOMAL SUBUNIT PROTEIN US14M"/>
    <property type="match status" value="1"/>
</dbReference>
<dbReference type="Pfam" id="PF00253">
    <property type="entry name" value="Ribosomal_S14"/>
    <property type="match status" value="1"/>
</dbReference>
<dbReference type="SUPFAM" id="SSF57716">
    <property type="entry name" value="Glucocorticoid receptor-like (DNA-binding domain)"/>
    <property type="match status" value="1"/>
</dbReference>
<dbReference type="PROSITE" id="PS00527">
    <property type="entry name" value="RIBOSOMAL_S14"/>
    <property type="match status" value="1"/>
</dbReference>
<evidence type="ECO:0000255" key="1">
    <source>
        <dbReference type="HAMAP-Rule" id="MF_00537"/>
    </source>
</evidence>
<evidence type="ECO:0000305" key="2"/>
<reference key="1">
    <citation type="submission" date="2008-04" db="EMBL/GenBank/DDBJ databases">
        <title>Complete sequence of chromosome of Exiguobacterium sibiricum 255-15.</title>
        <authorList>
            <consortium name="US DOE Joint Genome Institute"/>
            <person name="Copeland A."/>
            <person name="Lucas S."/>
            <person name="Lapidus A."/>
            <person name="Glavina del Rio T."/>
            <person name="Dalin E."/>
            <person name="Tice H."/>
            <person name="Bruce D."/>
            <person name="Goodwin L."/>
            <person name="Pitluck S."/>
            <person name="Kiss H."/>
            <person name="Chertkov O."/>
            <person name="Monk C."/>
            <person name="Brettin T."/>
            <person name="Detter J.C."/>
            <person name="Han C."/>
            <person name="Kuske C.R."/>
            <person name="Schmutz J."/>
            <person name="Larimer F."/>
            <person name="Land M."/>
            <person name="Hauser L."/>
            <person name="Kyrpides N."/>
            <person name="Mikhailova N."/>
            <person name="Vishnivetskaya T."/>
            <person name="Rodrigues D.F."/>
            <person name="Gilichinsky D."/>
            <person name="Tiedje J."/>
            <person name="Richardson P."/>
        </authorList>
    </citation>
    <scope>NUCLEOTIDE SEQUENCE [LARGE SCALE GENOMIC DNA]</scope>
    <source>
        <strain>DSM 17290 / CCUG 55495 / CIP 109462 / JCM 13490 / 255-15</strain>
    </source>
</reference>
<feature type="chain" id="PRO_1000128403" description="Small ribosomal subunit protein uS14">
    <location>
        <begin position="1"/>
        <end position="89"/>
    </location>
</feature>
<organism>
    <name type="scientific">Exiguobacterium sibiricum (strain DSM 17290 / CCUG 55495 / CIP 109462 / JCM 13490 / 255-15)</name>
    <dbReference type="NCBI Taxonomy" id="262543"/>
    <lineage>
        <taxon>Bacteria</taxon>
        <taxon>Bacillati</taxon>
        <taxon>Bacillota</taxon>
        <taxon>Bacilli</taxon>
        <taxon>Bacillales</taxon>
        <taxon>Bacillales Family XII. Incertae Sedis</taxon>
        <taxon>Exiguobacterium</taxon>
    </lineage>
</organism>
<keyword id="KW-1185">Reference proteome</keyword>
<keyword id="KW-0687">Ribonucleoprotein</keyword>
<keyword id="KW-0689">Ribosomal protein</keyword>
<keyword id="KW-0694">RNA-binding</keyword>
<keyword id="KW-0699">rRNA-binding</keyword>
<gene>
    <name evidence="1" type="primary">rpsN</name>
    <name type="ordered locus">Exig_0109</name>
</gene>
<sequence length="89" mass="10062">MAKKSMIAREVKRQALVERYAEQRAELKAQGDYIGLSKLPRNSSAVRLHNRCSITGRPHGYIGKFGISRIKFRDLAHKGQIPGVKKASW</sequence>
<accession>B1YGW3</accession>
<protein>
    <recommendedName>
        <fullName evidence="1">Small ribosomal subunit protein uS14</fullName>
    </recommendedName>
    <alternativeName>
        <fullName evidence="2">30S ribosomal protein S14</fullName>
    </alternativeName>
</protein>
<comment type="function">
    <text evidence="1">Binds 16S rRNA, required for the assembly of 30S particles and may also be responsible for determining the conformation of the 16S rRNA at the A site.</text>
</comment>
<comment type="subunit">
    <text evidence="1">Part of the 30S ribosomal subunit. Contacts proteins S3 and S10.</text>
</comment>
<comment type="similarity">
    <text evidence="1">Belongs to the universal ribosomal protein uS14 family.</text>
</comment>
<name>RS14_EXIS2</name>
<proteinExistence type="inferred from homology"/>